<evidence type="ECO:0000255" key="1">
    <source>
        <dbReference type="HAMAP-Rule" id="MF_01522"/>
    </source>
</evidence>
<evidence type="ECO:0000305" key="2"/>
<reference key="1">
    <citation type="journal article" date="2004" name="Science">
        <title>The genomic sequence of the accidental pathogen Legionella pneumophila.</title>
        <authorList>
            <person name="Chien M."/>
            <person name="Morozova I."/>
            <person name="Shi S."/>
            <person name="Sheng H."/>
            <person name="Chen J."/>
            <person name="Gomez S.M."/>
            <person name="Asamani G."/>
            <person name="Hill K."/>
            <person name="Nuara J."/>
            <person name="Feder M."/>
            <person name="Rineer J."/>
            <person name="Greenberg J.J."/>
            <person name="Steshenko V."/>
            <person name="Park S.H."/>
            <person name="Zhao B."/>
            <person name="Teplitskaya E."/>
            <person name="Edwards J.R."/>
            <person name="Pampou S."/>
            <person name="Georghiou A."/>
            <person name="Chou I.-C."/>
            <person name="Iannuccilli W."/>
            <person name="Ulz M.E."/>
            <person name="Kim D.H."/>
            <person name="Geringer-Sameth A."/>
            <person name="Goldsberry C."/>
            <person name="Morozov P."/>
            <person name="Fischer S.G."/>
            <person name="Segal G."/>
            <person name="Qu X."/>
            <person name="Rzhetsky A."/>
            <person name="Zhang P."/>
            <person name="Cayanis E."/>
            <person name="De Jong P.J."/>
            <person name="Ju J."/>
            <person name="Kalachikov S."/>
            <person name="Shuman H.A."/>
            <person name="Russo J.J."/>
        </authorList>
    </citation>
    <scope>NUCLEOTIDE SEQUENCE [LARGE SCALE GENOMIC DNA]</scope>
    <source>
        <strain>Philadelphia 1 / ATCC 33152 / DSM 7513</strain>
    </source>
</reference>
<comment type="function">
    <text evidence="1">Transport of potassium into the cell. Likely operates as a K(+):H(+) symporter.</text>
</comment>
<comment type="catalytic activity">
    <reaction evidence="1">
        <text>K(+)(in) + H(+)(in) = K(+)(out) + H(+)(out)</text>
        <dbReference type="Rhea" id="RHEA:28490"/>
        <dbReference type="ChEBI" id="CHEBI:15378"/>
        <dbReference type="ChEBI" id="CHEBI:29103"/>
    </reaction>
    <physiologicalReaction direction="right-to-left" evidence="1">
        <dbReference type="Rhea" id="RHEA:28492"/>
    </physiologicalReaction>
</comment>
<comment type="subcellular location">
    <subcellularLocation>
        <location evidence="1">Cell inner membrane</location>
        <topology evidence="1">Multi-pass membrane protein</topology>
    </subcellularLocation>
</comment>
<comment type="similarity">
    <text evidence="1">Belongs to the HAK/KUP transporter (TC 2.A.72) family.</text>
</comment>
<comment type="sequence caution" evidence="2">
    <conflict type="erroneous initiation">
        <sequence resource="EMBL-CDS" id="AAU27273"/>
    </conflict>
</comment>
<dbReference type="EMBL" id="AE017354">
    <property type="protein sequence ID" value="AAU27273.1"/>
    <property type="status" value="ALT_INIT"/>
    <property type="molecule type" value="Genomic_DNA"/>
</dbReference>
<dbReference type="RefSeq" id="WP_050070678.1">
    <property type="nucleotide sequence ID" value="NC_002942.5"/>
</dbReference>
<dbReference type="RefSeq" id="YP_095220.1">
    <property type="nucleotide sequence ID" value="NC_002942.5"/>
</dbReference>
<dbReference type="STRING" id="272624.lpg1188"/>
<dbReference type="PaxDb" id="272624-lpg1188"/>
<dbReference type="KEGG" id="lpn:lpg1188"/>
<dbReference type="PATRIC" id="fig|272624.6.peg.1250"/>
<dbReference type="eggNOG" id="COG3158">
    <property type="taxonomic scope" value="Bacteria"/>
</dbReference>
<dbReference type="HOGENOM" id="CLU_008142_4_2_6"/>
<dbReference type="OrthoDB" id="9805577at2"/>
<dbReference type="Proteomes" id="UP000000609">
    <property type="component" value="Chromosome"/>
</dbReference>
<dbReference type="GO" id="GO:0005886">
    <property type="term" value="C:plasma membrane"/>
    <property type="evidence" value="ECO:0007669"/>
    <property type="project" value="UniProtKB-SubCell"/>
</dbReference>
<dbReference type="GO" id="GO:0015079">
    <property type="term" value="F:potassium ion transmembrane transporter activity"/>
    <property type="evidence" value="ECO:0007669"/>
    <property type="project" value="UniProtKB-UniRule"/>
</dbReference>
<dbReference type="GO" id="GO:0015293">
    <property type="term" value="F:symporter activity"/>
    <property type="evidence" value="ECO:0007669"/>
    <property type="project" value="UniProtKB-UniRule"/>
</dbReference>
<dbReference type="HAMAP" id="MF_01522">
    <property type="entry name" value="Kup"/>
    <property type="match status" value="1"/>
</dbReference>
<dbReference type="InterPro" id="IPR003855">
    <property type="entry name" value="K+_transporter"/>
</dbReference>
<dbReference type="InterPro" id="IPR053952">
    <property type="entry name" value="K_trans_C"/>
</dbReference>
<dbReference type="InterPro" id="IPR053951">
    <property type="entry name" value="K_trans_N"/>
</dbReference>
<dbReference type="InterPro" id="IPR023051">
    <property type="entry name" value="Kup"/>
</dbReference>
<dbReference type="PANTHER" id="PTHR30540:SF79">
    <property type="entry name" value="LOW AFFINITY POTASSIUM TRANSPORT SYSTEM PROTEIN KUP"/>
    <property type="match status" value="1"/>
</dbReference>
<dbReference type="PANTHER" id="PTHR30540">
    <property type="entry name" value="OSMOTIC STRESS POTASSIUM TRANSPORTER"/>
    <property type="match status" value="1"/>
</dbReference>
<dbReference type="Pfam" id="PF02705">
    <property type="entry name" value="K_trans"/>
    <property type="match status" value="1"/>
</dbReference>
<dbReference type="Pfam" id="PF22776">
    <property type="entry name" value="K_trans_C"/>
    <property type="match status" value="1"/>
</dbReference>
<gene>
    <name evidence="1" type="primary">kup1</name>
    <name type="ordered locus">lpg1188</name>
</gene>
<sequence length="624" mass="69902">MKKNRFTYGLALGALGVVFGDIGTSPLYALKVTLSGIPINQFNILGVLSLIFWSLIIIVSFKYLMIIFRADNDGEGGILALLALMKHKSTKYQPLFYIVAIFGAGLLLGDGMLTPAISVVSAVEGLGTLSDKLYPYVLPIASVILVLLFSLQAKGTARIGYLFGPLILIWFITIAILGILQIVEHPVVLQAINPYHAIAFLVDEGLRGYFLLGGIFLVVTGGEALFADIGHFGKNPIRFSWFFIALPCLLLNYFGQGANLIVRPEEISNPFFMIAPPWFYLPLIIIATVATVIASQAVISATFSLTKQAVLLGLCPKIPIVQTSMLHSGQIYVPQINFILFIGTMAFCLAFKTSDNLAHAYGIAVNLEMLLVDAMVAYAAVSIWRWSTFNVIFLFGLFLLIDLAFLGANTHKFITGGWVPIVLAFFIAFIMYSWRYGLEYLRDNFYMNKEDISKILKQLQYKSLNQLPGVSAIFITDVYDKSGGSFLHFLKLNRSVPENVLIVNYIVDNIPYVHYSQRYEIVCLDEKVCKLVIHYGFMETINIPRSLEKACNKNILPFKFNVDTATFMVEIPNIMASKEKRSLSFYWQEKLFAFLMRNYSANLNIEFYKLPYNRTIAIGTYCIL</sequence>
<proteinExistence type="inferred from homology"/>
<protein>
    <recommendedName>
        <fullName evidence="1">Probable potassium transport system protein Kup 1</fullName>
    </recommendedName>
</protein>
<accession>Q5ZW98</accession>
<keyword id="KW-0997">Cell inner membrane</keyword>
<keyword id="KW-1003">Cell membrane</keyword>
<keyword id="KW-0406">Ion transport</keyword>
<keyword id="KW-0472">Membrane</keyword>
<keyword id="KW-0630">Potassium</keyword>
<keyword id="KW-0633">Potassium transport</keyword>
<keyword id="KW-1185">Reference proteome</keyword>
<keyword id="KW-0769">Symport</keyword>
<keyword id="KW-0812">Transmembrane</keyword>
<keyword id="KW-1133">Transmembrane helix</keyword>
<keyword id="KW-0813">Transport</keyword>
<organism>
    <name type="scientific">Legionella pneumophila subsp. pneumophila (strain Philadelphia 1 / ATCC 33152 / DSM 7513)</name>
    <dbReference type="NCBI Taxonomy" id="272624"/>
    <lineage>
        <taxon>Bacteria</taxon>
        <taxon>Pseudomonadati</taxon>
        <taxon>Pseudomonadota</taxon>
        <taxon>Gammaproteobacteria</taxon>
        <taxon>Legionellales</taxon>
        <taxon>Legionellaceae</taxon>
        <taxon>Legionella</taxon>
    </lineage>
</organism>
<name>KUP1_LEGPH</name>
<feature type="chain" id="PRO_0000209032" description="Probable potassium transport system protein Kup 1">
    <location>
        <begin position="1"/>
        <end position="624"/>
    </location>
</feature>
<feature type="transmembrane region" description="Helical" evidence="1">
    <location>
        <begin position="10"/>
        <end position="30"/>
    </location>
</feature>
<feature type="transmembrane region" description="Helical" evidence="1">
    <location>
        <begin position="48"/>
        <end position="68"/>
    </location>
</feature>
<feature type="transmembrane region" description="Helical" evidence="1">
    <location>
        <begin position="94"/>
        <end position="114"/>
    </location>
</feature>
<feature type="transmembrane region" description="Helical" evidence="1">
    <location>
        <begin position="133"/>
        <end position="153"/>
    </location>
</feature>
<feature type="transmembrane region" description="Helical" evidence="1">
    <location>
        <begin position="159"/>
        <end position="179"/>
    </location>
</feature>
<feature type="transmembrane region" description="Helical" evidence="1">
    <location>
        <begin position="210"/>
        <end position="230"/>
    </location>
</feature>
<feature type="transmembrane region" description="Helical" evidence="1">
    <location>
        <begin position="242"/>
        <end position="262"/>
    </location>
</feature>
<feature type="transmembrane region" description="Helical" evidence="1">
    <location>
        <begin position="270"/>
        <end position="290"/>
    </location>
</feature>
<feature type="transmembrane region" description="Helical" evidence="1">
    <location>
        <begin position="331"/>
        <end position="351"/>
    </location>
</feature>
<feature type="transmembrane region" description="Helical" evidence="1">
    <location>
        <begin position="363"/>
        <end position="383"/>
    </location>
</feature>
<feature type="transmembrane region" description="Helical" evidence="1">
    <location>
        <begin position="388"/>
        <end position="408"/>
    </location>
</feature>
<feature type="transmembrane region" description="Helical" evidence="1">
    <location>
        <begin position="413"/>
        <end position="433"/>
    </location>
</feature>